<accession>Q9HSF7</accession>
<name>TF2B7_HALSA</name>
<proteinExistence type="inferred from homology"/>
<gene>
    <name evidence="1" type="primary">tfbG</name>
    <name type="ordered locus">VNG_0254G</name>
</gene>
<organism>
    <name type="scientific">Halobacterium salinarum (strain ATCC 700922 / JCM 11081 / NRC-1)</name>
    <name type="common">Halobacterium halobium</name>
    <dbReference type="NCBI Taxonomy" id="64091"/>
    <lineage>
        <taxon>Archaea</taxon>
        <taxon>Methanobacteriati</taxon>
        <taxon>Methanobacteriota</taxon>
        <taxon>Stenosarchaea group</taxon>
        <taxon>Halobacteria</taxon>
        <taxon>Halobacteriales</taxon>
        <taxon>Halobacteriaceae</taxon>
        <taxon>Halobacterium</taxon>
        <taxon>Halobacterium salinarum NRC-34001</taxon>
    </lineage>
</organism>
<evidence type="ECO:0000255" key="1">
    <source>
        <dbReference type="HAMAP-Rule" id="MF_00383"/>
    </source>
</evidence>
<evidence type="ECO:0000255" key="2">
    <source>
        <dbReference type="PROSITE-ProRule" id="PRU00469"/>
    </source>
</evidence>
<evidence type="ECO:0000256" key="3">
    <source>
        <dbReference type="SAM" id="MobiDB-lite"/>
    </source>
</evidence>
<comment type="function">
    <text evidence="1">Stabilizes TBP binding to an archaeal box-A promoter. Also responsible for recruiting RNA polymerase II to the pre-initiation complex (DNA-TBP-TFIIB).</text>
</comment>
<comment type="similarity">
    <text evidence="1">Belongs to the TFIIB family.</text>
</comment>
<feature type="chain" id="PRO_0000119317" description="Transcription initiation factor IIB 7">
    <location>
        <begin position="1"/>
        <end position="323"/>
    </location>
</feature>
<feature type="repeat" description="1">
    <location>
        <begin position="142"/>
        <end position="225"/>
    </location>
</feature>
<feature type="repeat" description="2">
    <location>
        <begin position="236"/>
        <end position="317"/>
    </location>
</feature>
<feature type="zinc finger region" description="TFIIB-type" evidence="2">
    <location>
        <begin position="24"/>
        <end position="56"/>
    </location>
</feature>
<feature type="region of interest" description="Disordered" evidence="3">
    <location>
        <begin position="1"/>
        <end position="35"/>
    </location>
</feature>
<feature type="compositionally biased region" description="Basic and acidic residues" evidence="3">
    <location>
        <begin position="1"/>
        <end position="16"/>
    </location>
</feature>
<feature type="binding site" evidence="2">
    <location>
        <position position="29"/>
    </location>
    <ligand>
        <name>Zn(2+)</name>
        <dbReference type="ChEBI" id="CHEBI:29105"/>
    </ligand>
</feature>
<feature type="binding site" evidence="2">
    <location>
        <position position="32"/>
    </location>
    <ligand>
        <name>Zn(2+)</name>
        <dbReference type="ChEBI" id="CHEBI:29105"/>
    </ligand>
</feature>
<feature type="binding site" evidence="2">
    <location>
        <position position="48"/>
    </location>
    <ligand>
        <name>Zn(2+)</name>
        <dbReference type="ChEBI" id="CHEBI:29105"/>
    </ligand>
</feature>
<feature type="binding site" evidence="2">
    <location>
        <position position="51"/>
    </location>
    <ligand>
        <name>Zn(2+)</name>
        <dbReference type="ChEBI" id="CHEBI:29105"/>
    </ligand>
</feature>
<keyword id="KW-0479">Metal-binding</keyword>
<keyword id="KW-1185">Reference proteome</keyword>
<keyword id="KW-0677">Repeat</keyword>
<keyword id="KW-0804">Transcription</keyword>
<keyword id="KW-0805">Transcription regulation</keyword>
<keyword id="KW-0862">Zinc</keyword>
<keyword id="KW-0863">Zinc-finger</keyword>
<dbReference type="EMBL" id="AE004437">
    <property type="protein sequence ID" value="AAG18850.1"/>
    <property type="molecule type" value="Genomic_DNA"/>
</dbReference>
<dbReference type="PIR" id="F84185">
    <property type="entry name" value="F84185"/>
</dbReference>
<dbReference type="RefSeq" id="WP_010902144.1">
    <property type="nucleotide sequence ID" value="NC_002607.1"/>
</dbReference>
<dbReference type="SMR" id="Q9HSF7"/>
<dbReference type="FunCoup" id="Q9HSF7">
    <property type="interactions" value="5"/>
</dbReference>
<dbReference type="STRING" id="64091.VNG_0254G"/>
<dbReference type="PaxDb" id="64091-VNG_0254G"/>
<dbReference type="KEGG" id="hal:VNG_0254G"/>
<dbReference type="PATRIC" id="fig|64091.14.peg.186"/>
<dbReference type="HOGENOM" id="CLU_043736_0_0_2"/>
<dbReference type="InParanoid" id="Q9HSF7"/>
<dbReference type="OrthoDB" id="7429at2157"/>
<dbReference type="PhylomeDB" id="Q9HSF7"/>
<dbReference type="Proteomes" id="UP000000554">
    <property type="component" value="Chromosome"/>
</dbReference>
<dbReference type="GO" id="GO:0097550">
    <property type="term" value="C:transcription preinitiation complex"/>
    <property type="evidence" value="ECO:0000318"/>
    <property type="project" value="GO_Central"/>
</dbReference>
<dbReference type="GO" id="GO:0003700">
    <property type="term" value="F:DNA-binding transcription factor activity"/>
    <property type="evidence" value="ECO:0007669"/>
    <property type="project" value="UniProtKB-UniRule"/>
</dbReference>
<dbReference type="GO" id="GO:0017025">
    <property type="term" value="F:TBP-class protein binding"/>
    <property type="evidence" value="ECO:0007669"/>
    <property type="project" value="InterPro"/>
</dbReference>
<dbReference type="GO" id="GO:0008270">
    <property type="term" value="F:zinc ion binding"/>
    <property type="evidence" value="ECO:0007669"/>
    <property type="project" value="UniProtKB-UniRule"/>
</dbReference>
<dbReference type="GO" id="GO:0006352">
    <property type="term" value="P:DNA-templated transcription initiation"/>
    <property type="evidence" value="ECO:0000318"/>
    <property type="project" value="GO_Central"/>
</dbReference>
<dbReference type="GO" id="GO:0070897">
    <property type="term" value="P:transcription preinitiation complex assembly"/>
    <property type="evidence" value="ECO:0007669"/>
    <property type="project" value="InterPro"/>
</dbReference>
<dbReference type="CDD" id="cd20549">
    <property type="entry name" value="CYCLIN_TFIIB_archaea_like_rpt1"/>
    <property type="match status" value="1"/>
</dbReference>
<dbReference type="CDD" id="cd20550">
    <property type="entry name" value="CYCLIN_TFIIB_archaea_like_rpt2"/>
    <property type="match status" value="1"/>
</dbReference>
<dbReference type="FunFam" id="1.10.472.10:FF:000023">
    <property type="entry name" value="Transcription initiation factor IIB"/>
    <property type="match status" value="1"/>
</dbReference>
<dbReference type="FunFam" id="1.10.472.170:FF:000001">
    <property type="entry name" value="Transcription initiation factor IIB"/>
    <property type="match status" value="1"/>
</dbReference>
<dbReference type="Gene3D" id="1.10.472.170">
    <property type="match status" value="1"/>
</dbReference>
<dbReference type="Gene3D" id="1.10.472.10">
    <property type="entry name" value="Cyclin-like"/>
    <property type="match status" value="1"/>
</dbReference>
<dbReference type="HAMAP" id="MF_00383">
    <property type="entry name" value="TF2B_arch"/>
    <property type="match status" value="1"/>
</dbReference>
<dbReference type="InterPro" id="IPR013763">
    <property type="entry name" value="Cyclin-like_dom"/>
</dbReference>
<dbReference type="InterPro" id="IPR036915">
    <property type="entry name" value="Cyclin-like_sf"/>
</dbReference>
<dbReference type="InterPro" id="IPR000812">
    <property type="entry name" value="TFIIB"/>
</dbReference>
<dbReference type="InterPro" id="IPR023484">
    <property type="entry name" value="TFIIB_arc"/>
</dbReference>
<dbReference type="InterPro" id="IPR023486">
    <property type="entry name" value="TFIIB_CS"/>
</dbReference>
<dbReference type="InterPro" id="IPR013150">
    <property type="entry name" value="TFIIB_cyclin"/>
</dbReference>
<dbReference type="InterPro" id="IPR013137">
    <property type="entry name" value="Znf_TFIIB"/>
</dbReference>
<dbReference type="NCBIfam" id="NF001658">
    <property type="entry name" value="PRK00423.1"/>
    <property type="match status" value="1"/>
</dbReference>
<dbReference type="PANTHER" id="PTHR11618:SF13">
    <property type="entry name" value="TRANSCRIPTION INITIATION FACTOR IIB"/>
    <property type="match status" value="1"/>
</dbReference>
<dbReference type="PANTHER" id="PTHR11618">
    <property type="entry name" value="TRANSCRIPTION INITIATION FACTOR IIB-RELATED"/>
    <property type="match status" value="1"/>
</dbReference>
<dbReference type="Pfam" id="PF00382">
    <property type="entry name" value="TFIIB"/>
    <property type="match status" value="2"/>
</dbReference>
<dbReference type="Pfam" id="PF08271">
    <property type="entry name" value="Zn_Ribbon_TF"/>
    <property type="match status" value="1"/>
</dbReference>
<dbReference type="PRINTS" id="PR00685">
    <property type="entry name" value="TIFACTORIIB"/>
</dbReference>
<dbReference type="SMART" id="SM00385">
    <property type="entry name" value="CYCLIN"/>
    <property type="match status" value="2"/>
</dbReference>
<dbReference type="SUPFAM" id="SSF47954">
    <property type="entry name" value="Cyclin-like"/>
    <property type="match status" value="2"/>
</dbReference>
<dbReference type="SUPFAM" id="SSF57783">
    <property type="entry name" value="Zinc beta-ribbon"/>
    <property type="match status" value="1"/>
</dbReference>
<dbReference type="PROSITE" id="PS00782">
    <property type="entry name" value="TFIIB"/>
    <property type="match status" value="2"/>
</dbReference>
<dbReference type="PROSITE" id="PS51134">
    <property type="entry name" value="ZF_TFIIB"/>
    <property type="match status" value="1"/>
</dbReference>
<sequence length="323" mass="36630">MTRSTRQRERETAAKQEEEEDSEEGVRECPECGSDNLVKSSDRAELVCNDCGLVVEEEQIDPGPEWRAFNHQERQEKSRVGAPTTQTMHDKGLTTTIDWKDKDAYGRSISSKKRSQMHRLRKWQERIRTKDAGERNLQFALSEIDRMASALGVPRSVREVASVIYRRALKEDLIRGRSIEGVATSALYAACRKEGIPRSLEEISEVSRVERKEIGRTYRYISQELGLEMKPVDPKKYVPRFCSELELTEEVQSKANEIIETTAEEGLLSGKSPTGYAAAAIYAASLLCNEKKTQREVADVAQVTEVTIRNRYQEQIEAMGIHG</sequence>
<reference key="1">
    <citation type="journal article" date="2000" name="Proc. Natl. Acad. Sci. U.S.A.">
        <title>Genome sequence of Halobacterium species NRC-1.</title>
        <authorList>
            <person name="Ng W.V."/>
            <person name="Kennedy S.P."/>
            <person name="Mahairas G.G."/>
            <person name="Berquist B."/>
            <person name="Pan M."/>
            <person name="Shukla H.D."/>
            <person name="Lasky S.R."/>
            <person name="Baliga N.S."/>
            <person name="Thorsson V."/>
            <person name="Sbrogna J."/>
            <person name="Swartzell S."/>
            <person name="Weir D."/>
            <person name="Hall J."/>
            <person name="Dahl T.A."/>
            <person name="Welti R."/>
            <person name="Goo Y.A."/>
            <person name="Leithauser B."/>
            <person name="Keller K."/>
            <person name="Cruz R."/>
            <person name="Danson M.J."/>
            <person name="Hough D.W."/>
            <person name="Maddocks D.G."/>
            <person name="Jablonski P.E."/>
            <person name="Krebs M.P."/>
            <person name="Angevine C.M."/>
            <person name="Dale H."/>
            <person name="Isenbarger T.A."/>
            <person name="Peck R.F."/>
            <person name="Pohlschroder M."/>
            <person name="Spudich J.L."/>
            <person name="Jung K.-H."/>
            <person name="Alam M."/>
            <person name="Freitas T."/>
            <person name="Hou S."/>
            <person name="Daniels C.J."/>
            <person name="Dennis P.P."/>
            <person name="Omer A.D."/>
            <person name="Ebhardt H."/>
            <person name="Lowe T.M."/>
            <person name="Liang P."/>
            <person name="Riley M."/>
            <person name="Hood L."/>
            <person name="DasSarma S."/>
        </authorList>
    </citation>
    <scope>NUCLEOTIDE SEQUENCE [LARGE SCALE GENOMIC DNA]</scope>
    <source>
        <strain>ATCC 700922 / JCM 11081 / NRC-1</strain>
    </source>
</reference>
<protein>
    <recommendedName>
        <fullName evidence="1">Transcription initiation factor IIB 7</fullName>
        <shortName evidence="1">TFIIB 7</shortName>
    </recommendedName>
</protein>